<sequence>MQAILSSWFIQGMIKATSDMWHKGWDERNGGNISLRLLAEEVEPYRRDFYQHPRKVELTQPAPELANSWFLVTGSGKFFRNVELNPAENLVLLQVSNDGMAYHIHWGLTQGGLPTSELAAHFQSHIVRMQVSGGTNRVIMHCHATNLIALSYVQKLENASFTRLLWEGSTECLVVFPDGIGIVPWMVPGTDGIGTQTAEQMREHSLVLWPFHGIFGSGPTLDDAFGLIDTAEKSAEIMVKVLSMGGKKQTISREQLIALAARFDVTPMAAALDA</sequence>
<protein>
    <recommendedName>
        <fullName evidence="1">Rhamnulose-1-phosphate aldolase</fullName>
        <ecNumber evidence="1">4.1.2.19</ecNumber>
    </recommendedName>
</protein>
<reference key="1">
    <citation type="submission" date="2008-04" db="EMBL/GenBank/DDBJ databases">
        <title>Complete sequence of Yersinia pseudotuberculosis PB1/+.</title>
        <authorList>
            <person name="Copeland A."/>
            <person name="Lucas S."/>
            <person name="Lapidus A."/>
            <person name="Glavina del Rio T."/>
            <person name="Dalin E."/>
            <person name="Tice H."/>
            <person name="Bruce D."/>
            <person name="Goodwin L."/>
            <person name="Pitluck S."/>
            <person name="Munk A.C."/>
            <person name="Brettin T."/>
            <person name="Detter J.C."/>
            <person name="Han C."/>
            <person name="Tapia R."/>
            <person name="Schmutz J."/>
            <person name="Larimer F."/>
            <person name="Land M."/>
            <person name="Hauser L."/>
            <person name="Challacombe J.F."/>
            <person name="Green L."/>
            <person name="Lindler L.E."/>
            <person name="Nikolich M.P."/>
            <person name="Richardson P."/>
        </authorList>
    </citation>
    <scope>NUCLEOTIDE SEQUENCE [LARGE SCALE GENOMIC DNA]</scope>
    <source>
        <strain>PB1/+</strain>
    </source>
</reference>
<comment type="function">
    <text evidence="1">Catalyzes the reversible cleavage of L-rhamnulose-1-phosphate to dihydroxyacetone phosphate (DHAP) and L-lactaldehyde.</text>
</comment>
<comment type="catalytic activity">
    <reaction evidence="1">
        <text>L-rhamnulose 1-phosphate = (S)-lactaldehyde + dihydroxyacetone phosphate</text>
        <dbReference type="Rhea" id="RHEA:19689"/>
        <dbReference type="ChEBI" id="CHEBI:18041"/>
        <dbReference type="ChEBI" id="CHEBI:57642"/>
        <dbReference type="ChEBI" id="CHEBI:58313"/>
        <dbReference type="EC" id="4.1.2.19"/>
    </reaction>
</comment>
<comment type="cofactor">
    <cofactor evidence="1">
        <name>Zn(2+)</name>
        <dbReference type="ChEBI" id="CHEBI:29105"/>
    </cofactor>
    <text evidence="1">Binds 1 zinc ion per subunit.</text>
</comment>
<comment type="pathway">
    <text evidence="1">Carbohydrate degradation; L-rhamnose degradation; glycerone phosphate from L-rhamnose: step 3/3.</text>
</comment>
<comment type="subunit">
    <text evidence="1">Homotetramer.</text>
</comment>
<comment type="subcellular location">
    <subcellularLocation>
        <location evidence="1">Cytoplasm</location>
    </subcellularLocation>
</comment>
<comment type="similarity">
    <text evidence="1">Belongs to the aldolase class II family. RhaD subfamily.</text>
</comment>
<organism>
    <name type="scientific">Yersinia pseudotuberculosis serotype IB (strain PB1/+)</name>
    <dbReference type="NCBI Taxonomy" id="502801"/>
    <lineage>
        <taxon>Bacteria</taxon>
        <taxon>Pseudomonadati</taxon>
        <taxon>Pseudomonadota</taxon>
        <taxon>Gammaproteobacteria</taxon>
        <taxon>Enterobacterales</taxon>
        <taxon>Yersiniaceae</taxon>
        <taxon>Yersinia</taxon>
    </lineage>
</organism>
<dbReference type="EC" id="4.1.2.19" evidence="1"/>
<dbReference type="EMBL" id="CP001048">
    <property type="protein sequence ID" value="ACC87395.1"/>
    <property type="molecule type" value="Genomic_DNA"/>
</dbReference>
<dbReference type="RefSeq" id="WP_012413440.1">
    <property type="nucleotide sequence ID" value="NZ_CP009780.1"/>
</dbReference>
<dbReference type="SMR" id="B2K1W0"/>
<dbReference type="GeneID" id="49787623"/>
<dbReference type="KEGG" id="ypb:YPTS_0406"/>
<dbReference type="PATRIC" id="fig|502801.10.peg.4084"/>
<dbReference type="UniPathway" id="UPA00541">
    <property type="reaction ID" value="UER00603"/>
</dbReference>
<dbReference type="GO" id="GO:0005829">
    <property type="term" value="C:cytosol"/>
    <property type="evidence" value="ECO:0007669"/>
    <property type="project" value="TreeGrafter"/>
</dbReference>
<dbReference type="GO" id="GO:0046872">
    <property type="term" value="F:metal ion binding"/>
    <property type="evidence" value="ECO:0007669"/>
    <property type="project" value="UniProtKB-KW"/>
</dbReference>
<dbReference type="GO" id="GO:0008994">
    <property type="term" value="F:rhamnulose-1-phosphate aldolase activity"/>
    <property type="evidence" value="ECO:0007669"/>
    <property type="project" value="UniProtKB-UniRule"/>
</dbReference>
<dbReference type="GO" id="GO:0019323">
    <property type="term" value="P:pentose catabolic process"/>
    <property type="evidence" value="ECO:0007669"/>
    <property type="project" value="TreeGrafter"/>
</dbReference>
<dbReference type="GO" id="GO:0019301">
    <property type="term" value="P:rhamnose catabolic process"/>
    <property type="evidence" value="ECO:0007669"/>
    <property type="project" value="UniProtKB-UniRule"/>
</dbReference>
<dbReference type="CDD" id="cd00398">
    <property type="entry name" value="Aldolase_II"/>
    <property type="match status" value="1"/>
</dbReference>
<dbReference type="FunFam" id="3.40.225.10:FF:000006">
    <property type="entry name" value="Rhamnulose-1-phosphate aldolase"/>
    <property type="match status" value="1"/>
</dbReference>
<dbReference type="Gene3D" id="3.40.225.10">
    <property type="entry name" value="Class II aldolase/adducin N-terminal domain"/>
    <property type="match status" value="1"/>
</dbReference>
<dbReference type="HAMAP" id="MF_00770">
    <property type="entry name" value="RhaD"/>
    <property type="match status" value="1"/>
</dbReference>
<dbReference type="InterPro" id="IPR050197">
    <property type="entry name" value="Aldolase_class_II_sugar_metab"/>
</dbReference>
<dbReference type="InterPro" id="IPR001303">
    <property type="entry name" value="Aldolase_II/adducin_N"/>
</dbReference>
<dbReference type="InterPro" id="IPR036409">
    <property type="entry name" value="Aldolase_II/adducin_N_sf"/>
</dbReference>
<dbReference type="InterPro" id="IPR013447">
    <property type="entry name" value="Rhamnulose-1-P_Aldolase"/>
</dbReference>
<dbReference type="NCBIfam" id="NF002963">
    <property type="entry name" value="PRK03634.1"/>
    <property type="match status" value="1"/>
</dbReference>
<dbReference type="NCBIfam" id="TIGR02624">
    <property type="entry name" value="rhamnu_1P_ald"/>
    <property type="match status" value="1"/>
</dbReference>
<dbReference type="PANTHER" id="PTHR22789">
    <property type="entry name" value="FUCULOSE PHOSPHATE ALDOLASE"/>
    <property type="match status" value="1"/>
</dbReference>
<dbReference type="PANTHER" id="PTHR22789:SF16">
    <property type="entry name" value="RHAMNULOSE-1-PHOSPHATE ALDOLASE"/>
    <property type="match status" value="1"/>
</dbReference>
<dbReference type="Pfam" id="PF00596">
    <property type="entry name" value="Aldolase_II"/>
    <property type="match status" value="1"/>
</dbReference>
<dbReference type="SMART" id="SM01007">
    <property type="entry name" value="Aldolase_II"/>
    <property type="match status" value="1"/>
</dbReference>
<dbReference type="SUPFAM" id="SSF53639">
    <property type="entry name" value="AraD/HMP-PK domain-like"/>
    <property type="match status" value="1"/>
</dbReference>
<accession>B2K1W0</accession>
<keyword id="KW-0963">Cytoplasm</keyword>
<keyword id="KW-0456">Lyase</keyword>
<keyword id="KW-0479">Metal-binding</keyword>
<keyword id="KW-0684">Rhamnose metabolism</keyword>
<keyword id="KW-0862">Zinc</keyword>
<gene>
    <name evidence="1" type="primary">rhaD</name>
    <name type="ordered locus">YPTS_0406</name>
</gene>
<evidence type="ECO:0000255" key="1">
    <source>
        <dbReference type="HAMAP-Rule" id="MF_00770"/>
    </source>
</evidence>
<proteinExistence type="inferred from homology"/>
<name>RHAD_YERPB</name>
<feature type="chain" id="PRO_1000193740" description="Rhamnulose-1-phosphate aldolase">
    <location>
        <begin position="1"/>
        <end position="274"/>
    </location>
</feature>
<feature type="active site" evidence="1">
    <location>
        <position position="117"/>
    </location>
</feature>
<feature type="binding site" evidence="1">
    <location>
        <position position="141"/>
    </location>
    <ligand>
        <name>Zn(2+)</name>
        <dbReference type="ChEBI" id="CHEBI:29105"/>
    </ligand>
</feature>
<feature type="binding site" evidence="1">
    <location>
        <position position="143"/>
    </location>
    <ligand>
        <name>Zn(2+)</name>
        <dbReference type="ChEBI" id="CHEBI:29105"/>
    </ligand>
</feature>
<feature type="binding site" evidence="1">
    <location>
        <position position="212"/>
    </location>
    <ligand>
        <name>Zn(2+)</name>
        <dbReference type="ChEBI" id="CHEBI:29105"/>
    </ligand>
</feature>